<accession>Q03T54</accession>
<reference key="1">
    <citation type="journal article" date="2006" name="Proc. Natl. Acad. Sci. U.S.A.">
        <title>Comparative genomics of the lactic acid bacteria.</title>
        <authorList>
            <person name="Makarova K.S."/>
            <person name="Slesarev A."/>
            <person name="Wolf Y.I."/>
            <person name="Sorokin A."/>
            <person name="Mirkin B."/>
            <person name="Koonin E.V."/>
            <person name="Pavlov A."/>
            <person name="Pavlova N."/>
            <person name="Karamychev V."/>
            <person name="Polouchine N."/>
            <person name="Shakhova V."/>
            <person name="Grigoriev I."/>
            <person name="Lou Y."/>
            <person name="Rohksar D."/>
            <person name="Lucas S."/>
            <person name="Huang K."/>
            <person name="Goodstein D.M."/>
            <person name="Hawkins T."/>
            <person name="Plengvidhya V."/>
            <person name="Welker D."/>
            <person name="Hughes J."/>
            <person name="Goh Y."/>
            <person name="Benson A."/>
            <person name="Baldwin K."/>
            <person name="Lee J.-H."/>
            <person name="Diaz-Muniz I."/>
            <person name="Dosti B."/>
            <person name="Smeianov V."/>
            <person name="Wechter W."/>
            <person name="Barabote R."/>
            <person name="Lorca G."/>
            <person name="Altermann E."/>
            <person name="Barrangou R."/>
            <person name="Ganesan B."/>
            <person name="Xie Y."/>
            <person name="Rawsthorne H."/>
            <person name="Tamir D."/>
            <person name="Parker C."/>
            <person name="Breidt F."/>
            <person name="Broadbent J.R."/>
            <person name="Hutkins R."/>
            <person name="O'Sullivan D."/>
            <person name="Steele J."/>
            <person name="Unlu G."/>
            <person name="Saier M.H. Jr."/>
            <person name="Klaenhammer T."/>
            <person name="Richardson P."/>
            <person name="Kozyavkin S."/>
            <person name="Weimer B.C."/>
            <person name="Mills D.A."/>
        </authorList>
    </citation>
    <scope>NUCLEOTIDE SEQUENCE [LARGE SCALE GENOMIC DNA]</scope>
    <source>
        <strain>ATCC 367 / BCRC 12310 / CIP 105137 / JCM 1170 / LMG 11437 / NCIMB 947 / NCTC 947</strain>
    </source>
</reference>
<keyword id="KW-0067">ATP-binding</keyword>
<keyword id="KW-0414">Isoprene biosynthesis</keyword>
<keyword id="KW-0418">Kinase</keyword>
<keyword id="KW-0547">Nucleotide-binding</keyword>
<keyword id="KW-1185">Reference proteome</keyword>
<keyword id="KW-0808">Transferase</keyword>
<protein>
    <recommendedName>
        <fullName evidence="1">4-diphosphocytidyl-2-C-methyl-D-erythritol kinase</fullName>
        <shortName evidence="1">CMK</shortName>
        <ecNumber evidence="1">2.7.1.148</ecNumber>
    </recommendedName>
    <alternativeName>
        <fullName evidence="1">4-(cytidine-5'-diphospho)-2-C-methyl-D-erythritol kinase</fullName>
    </alternativeName>
</protein>
<name>ISPE_LEVBA</name>
<comment type="function">
    <text evidence="1">Catalyzes the phosphorylation of the position 2 hydroxy group of 4-diphosphocytidyl-2C-methyl-D-erythritol.</text>
</comment>
<comment type="catalytic activity">
    <reaction evidence="1">
        <text>4-CDP-2-C-methyl-D-erythritol + ATP = 4-CDP-2-C-methyl-D-erythritol 2-phosphate + ADP + H(+)</text>
        <dbReference type="Rhea" id="RHEA:18437"/>
        <dbReference type="ChEBI" id="CHEBI:15378"/>
        <dbReference type="ChEBI" id="CHEBI:30616"/>
        <dbReference type="ChEBI" id="CHEBI:57823"/>
        <dbReference type="ChEBI" id="CHEBI:57919"/>
        <dbReference type="ChEBI" id="CHEBI:456216"/>
        <dbReference type="EC" id="2.7.1.148"/>
    </reaction>
</comment>
<comment type="pathway">
    <text evidence="1">Isoprenoid biosynthesis; isopentenyl diphosphate biosynthesis via DXP pathway; isopentenyl diphosphate from 1-deoxy-D-xylulose 5-phosphate: step 3/6.</text>
</comment>
<comment type="similarity">
    <text evidence="1">Belongs to the GHMP kinase family. IspE subfamily.</text>
</comment>
<evidence type="ECO:0000255" key="1">
    <source>
        <dbReference type="HAMAP-Rule" id="MF_00061"/>
    </source>
</evidence>
<organism>
    <name type="scientific">Levilactobacillus brevis (strain ATCC 367 / BCRC 12310 / CIP 105137 / JCM 1170 / LMG 11437 / NCIMB 947 / NCTC 947)</name>
    <name type="common">Lactobacillus brevis</name>
    <dbReference type="NCBI Taxonomy" id="387344"/>
    <lineage>
        <taxon>Bacteria</taxon>
        <taxon>Bacillati</taxon>
        <taxon>Bacillota</taxon>
        <taxon>Bacilli</taxon>
        <taxon>Lactobacillales</taxon>
        <taxon>Lactobacillaceae</taxon>
        <taxon>Levilactobacillus</taxon>
    </lineage>
</organism>
<feature type="chain" id="PRO_1000007857" description="4-diphosphocytidyl-2-C-methyl-D-erythritol kinase">
    <location>
        <begin position="1"/>
        <end position="284"/>
    </location>
</feature>
<feature type="active site" evidence="1">
    <location>
        <position position="10"/>
    </location>
</feature>
<feature type="active site" evidence="1">
    <location>
        <position position="137"/>
    </location>
</feature>
<feature type="binding site" evidence="1">
    <location>
        <begin position="95"/>
        <end position="105"/>
    </location>
    <ligand>
        <name>ATP</name>
        <dbReference type="ChEBI" id="CHEBI:30616"/>
    </ligand>
</feature>
<sequence>MQLIEKAPAKINLGLDTPYHHQDGAEEWNMVMTSVDLADYVEIQTLTKHKRIRVASDSGFLPNDQRNLAFQAAHLLQTNYGIDEGVNIRIKKNIPVAAGLGGGSSDAAAVLRGLNQLWSLGLSWQELAELGLQIDSDVPYCVYGRTAHVRGRGERITPLSKLPAAWVVLAKPKVSVSTPSILQQIQYDHLEHPDIDGLLRAIREQDIQGMCAVMGNALEPLTAHRYPEITQIKQQMMKFGADAAQMSGTGPTVFGLCSKQSRAQRVFNGMKGFCREVYLVRPLP</sequence>
<gene>
    <name evidence="1" type="primary">ispE</name>
    <name type="ordered locus">LVIS_0460</name>
</gene>
<dbReference type="EC" id="2.7.1.148" evidence="1"/>
<dbReference type="EMBL" id="CP000416">
    <property type="protein sequence ID" value="ABJ63618.1"/>
    <property type="molecule type" value="Genomic_DNA"/>
</dbReference>
<dbReference type="RefSeq" id="WP_011667244.1">
    <property type="nucleotide sequence ID" value="NC_008497.1"/>
</dbReference>
<dbReference type="SMR" id="Q03T54"/>
<dbReference type="STRING" id="387344.LVIS_0460"/>
<dbReference type="GeneID" id="56992270"/>
<dbReference type="KEGG" id="lbr:LVIS_0460"/>
<dbReference type="eggNOG" id="COG1947">
    <property type="taxonomic scope" value="Bacteria"/>
</dbReference>
<dbReference type="HOGENOM" id="CLU_053057_1_1_9"/>
<dbReference type="UniPathway" id="UPA00056">
    <property type="reaction ID" value="UER00094"/>
</dbReference>
<dbReference type="Proteomes" id="UP000001652">
    <property type="component" value="Chromosome"/>
</dbReference>
<dbReference type="GO" id="GO:0050515">
    <property type="term" value="F:4-(cytidine 5'-diphospho)-2-C-methyl-D-erythritol kinase activity"/>
    <property type="evidence" value="ECO:0007669"/>
    <property type="project" value="UniProtKB-UniRule"/>
</dbReference>
<dbReference type="GO" id="GO:0005524">
    <property type="term" value="F:ATP binding"/>
    <property type="evidence" value="ECO:0007669"/>
    <property type="project" value="UniProtKB-UniRule"/>
</dbReference>
<dbReference type="GO" id="GO:0019288">
    <property type="term" value="P:isopentenyl diphosphate biosynthetic process, methylerythritol 4-phosphate pathway"/>
    <property type="evidence" value="ECO:0007669"/>
    <property type="project" value="UniProtKB-UniRule"/>
</dbReference>
<dbReference type="GO" id="GO:0016114">
    <property type="term" value="P:terpenoid biosynthetic process"/>
    <property type="evidence" value="ECO:0007669"/>
    <property type="project" value="InterPro"/>
</dbReference>
<dbReference type="FunFam" id="3.30.70.890:FF:000006">
    <property type="entry name" value="4-diphosphocytidyl-2-C-methyl-D-erythritol kinase"/>
    <property type="match status" value="1"/>
</dbReference>
<dbReference type="Gene3D" id="3.30.230.10">
    <property type="match status" value="1"/>
</dbReference>
<dbReference type="Gene3D" id="3.30.70.890">
    <property type="entry name" value="GHMP kinase, C-terminal domain"/>
    <property type="match status" value="1"/>
</dbReference>
<dbReference type="HAMAP" id="MF_00061">
    <property type="entry name" value="IspE"/>
    <property type="match status" value="1"/>
</dbReference>
<dbReference type="InterPro" id="IPR013750">
    <property type="entry name" value="GHMP_kinase_C_dom"/>
</dbReference>
<dbReference type="InterPro" id="IPR036554">
    <property type="entry name" value="GHMP_kinase_C_sf"/>
</dbReference>
<dbReference type="InterPro" id="IPR006204">
    <property type="entry name" value="GHMP_kinase_N_dom"/>
</dbReference>
<dbReference type="InterPro" id="IPR004424">
    <property type="entry name" value="IspE"/>
</dbReference>
<dbReference type="InterPro" id="IPR020568">
    <property type="entry name" value="Ribosomal_Su5_D2-typ_SF"/>
</dbReference>
<dbReference type="InterPro" id="IPR014721">
    <property type="entry name" value="Ribsml_uS5_D2-typ_fold_subgr"/>
</dbReference>
<dbReference type="NCBIfam" id="TIGR00154">
    <property type="entry name" value="ispE"/>
    <property type="match status" value="1"/>
</dbReference>
<dbReference type="PANTHER" id="PTHR43527">
    <property type="entry name" value="4-DIPHOSPHOCYTIDYL-2-C-METHYL-D-ERYTHRITOL KINASE, CHLOROPLASTIC"/>
    <property type="match status" value="1"/>
</dbReference>
<dbReference type="PANTHER" id="PTHR43527:SF2">
    <property type="entry name" value="4-DIPHOSPHOCYTIDYL-2-C-METHYL-D-ERYTHRITOL KINASE, CHLOROPLASTIC"/>
    <property type="match status" value="1"/>
</dbReference>
<dbReference type="Pfam" id="PF08544">
    <property type="entry name" value="GHMP_kinases_C"/>
    <property type="match status" value="1"/>
</dbReference>
<dbReference type="Pfam" id="PF00288">
    <property type="entry name" value="GHMP_kinases_N"/>
    <property type="match status" value="1"/>
</dbReference>
<dbReference type="PIRSF" id="PIRSF010376">
    <property type="entry name" value="IspE"/>
    <property type="match status" value="1"/>
</dbReference>
<dbReference type="SUPFAM" id="SSF55060">
    <property type="entry name" value="GHMP Kinase, C-terminal domain"/>
    <property type="match status" value="1"/>
</dbReference>
<dbReference type="SUPFAM" id="SSF54211">
    <property type="entry name" value="Ribosomal protein S5 domain 2-like"/>
    <property type="match status" value="1"/>
</dbReference>
<proteinExistence type="inferred from homology"/>